<organism>
    <name type="scientific">Mus musculus</name>
    <name type="common">Mouse</name>
    <dbReference type="NCBI Taxonomy" id="10090"/>
    <lineage>
        <taxon>Eukaryota</taxon>
        <taxon>Metazoa</taxon>
        <taxon>Chordata</taxon>
        <taxon>Craniata</taxon>
        <taxon>Vertebrata</taxon>
        <taxon>Euteleostomi</taxon>
        <taxon>Mammalia</taxon>
        <taxon>Eutheria</taxon>
        <taxon>Euarchontoglires</taxon>
        <taxon>Glires</taxon>
        <taxon>Rodentia</taxon>
        <taxon>Myomorpha</taxon>
        <taxon>Muroidea</taxon>
        <taxon>Muridae</taxon>
        <taxon>Murinae</taxon>
        <taxon>Mus</taxon>
        <taxon>Mus</taxon>
    </lineage>
</organism>
<accession>Q6A4L0</accession>
<accession>E9QP74</accession>
<accession>Q8VC89</accession>
<sequence>MAQFAQVMAEVGDFGRFQVRLTILMGIPNFLAAFFIFGQVFMVLDEAHHCSVSWVKNHTFNLSAAEQLAISIPNDTAGRPESCLMFRPPPDSASLEDILSHRFNETQACDSGWDYPENRPQSLKKEFDLVCDRKNLKKTSQSVFMAGLLVGALVFGPVCDWIGRRPSLLMQVLLSGITSMATAFVSSFELYLALRFVLATANAGFLLSTNVLISEWVGPSWRTQAVVLAQSNVALGQMVLAGLAYGVRNWRLLQITGTAPVLLLFFYFWVLPESPRWLLSQGRTEEAKQLVQKAALVNGRPLSPELLNQLVPEKTGPSGNALDLFRHPHLRKVTLILIAVWFVDSLVYYSLSFQVGDFGLDIYVTQLIFGAVEMPGRFLSVLMMEKLGRKWSQLCTLTLAGIMYIIIIFIPGDLPTVVTVLAVVGKFASAAAFTISYVYTAELFPTIIRQTGMGLVSIFSRVGGIITPLVMLLEQYHQAIPMVIFGSLPIGAGLLCALLPETRGQTLKDTLQDLEQGLPAGSHKTAPQRQDMEALGRTSSVRVAVVKSSYF</sequence>
<keyword id="KW-1003">Cell membrane</keyword>
<keyword id="KW-0325">Glycoprotein</keyword>
<keyword id="KW-0472">Membrane</keyword>
<keyword id="KW-1185">Reference proteome</keyword>
<keyword id="KW-0812">Transmembrane</keyword>
<keyword id="KW-1133">Transmembrane helix</keyword>
<protein>
    <recommendedName>
        <fullName evidence="1">Solute carrier family 22 member 13</fullName>
    </recommendedName>
    <alternativeName>
        <fullName evidence="5">Organic anion transporter 10</fullName>
        <shortName evidence="5">OAT10</shortName>
    </alternativeName>
    <alternativeName>
        <fullName evidence="1">Organic cation transporter-like 3</fullName>
        <shortName evidence="1">ORCTL-3</shortName>
    </alternativeName>
</protein>
<dbReference type="EMBL" id="AF529220">
    <property type="protein sequence ID" value="AAQ09528.1"/>
    <property type="molecule type" value="mRNA"/>
</dbReference>
<dbReference type="EMBL" id="AC055818">
    <property type="status" value="NOT_ANNOTATED_CDS"/>
    <property type="molecule type" value="Genomic_DNA"/>
</dbReference>
<dbReference type="EMBL" id="BC021449">
    <property type="protein sequence ID" value="AAH21449.1"/>
    <property type="molecule type" value="mRNA"/>
</dbReference>
<dbReference type="CCDS" id="CCDS40802.1"/>
<dbReference type="RefSeq" id="NP_598741.2">
    <property type="nucleotide sequence ID" value="NM_133980.3"/>
</dbReference>
<dbReference type="SMR" id="Q6A4L0"/>
<dbReference type="FunCoup" id="Q6A4L0">
    <property type="interactions" value="90"/>
</dbReference>
<dbReference type="STRING" id="10090.ENSMUSP00000081855"/>
<dbReference type="GlyCosmos" id="Q6A4L0">
    <property type="glycosylation" value="4 sites, No reported glycans"/>
</dbReference>
<dbReference type="GlyGen" id="Q6A4L0">
    <property type="glycosylation" value="4 sites"/>
</dbReference>
<dbReference type="iPTMnet" id="Q6A4L0"/>
<dbReference type="PhosphoSitePlus" id="Q6A4L0"/>
<dbReference type="jPOST" id="Q6A4L0"/>
<dbReference type="PaxDb" id="10090-ENSMUSP00000081855"/>
<dbReference type="ProteomicsDB" id="260758"/>
<dbReference type="DNASU" id="102570"/>
<dbReference type="Ensembl" id="ENSMUST00000084797.6">
    <property type="protein sequence ID" value="ENSMUSP00000081855.5"/>
    <property type="gene ID" value="ENSMUSG00000074028.5"/>
</dbReference>
<dbReference type="GeneID" id="102570"/>
<dbReference type="KEGG" id="mmu:102570"/>
<dbReference type="UCSC" id="uc009sal.2">
    <property type="organism name" value="mouse"/>
</dbReference>
<dbReference type="AGR" id="MGI:2143107"/>
<dbReference type="CTD" id="9390"/>
<dbReference type="MGI" id="MGI:2143107">
    <property type="gene designation" value="Slc22a13"/>
</dbReference>
<dbReference type="VEuPathDB" id="HostDB:ENSMUSG00000074028"/>
<dbReference type="eggNOG" id="KOG0255">
    <property type="taxonomic scope" value="Eukaryota"/>
</dbReference>
<dbReference type="GeneTree" id="ENSGT00940000154607"/>
<dbReference type="HOGENOM" id="CLU_001265_33_3_1"/>
<dbReference type="InParanoid" id="Q6A4L0"/>
<dbReference type="OMA" id="LGVCQMT"/>
<dbReference type="OrthoDB" id="5296287at2759"/>
<dbReference type="PhylomeDB" id="Q6A4L0"/>
<dbReference type="TreeFam" id="TF315847"/>
<dbReference type="Reactome" id="R-MMU-197264">
    <property type="pathway name" value="Nicotinamide salvaging"/>
</dbReference>
<dbReference type="BioGRID-ORCS" id="102570">
    <property type="hits" value="1 hit in 77 CRISPR screens"/>
</dbReference>
<dbReference type="ChiTaRS" id="Slc22a13">
    <property type="organism name" value="mouse"/>
</dbReference>
<dbReference type="PRO" id="PR:Q6A4L0"/>
<dbReference type="Proteomes" id="UP000000589">
    <property type="component" value="Chromosome 9"/>
</dbReference>
<dbReference type="RNAct" id="Q6A4L0">
    <property type="molecule type" value="protein"/>
</dbReference>
<dbReference type="Bgee" id="ENSMUSG00000074028">
    <property type="expression patterns" value="Expressed in right kidney and 61 other cell types or tissues"/>
</dbReference>
<dbReference type="GO" id="GO:0016324">
    <property type="term" value="C:apical plasma membrane"/>
    <property type="evidence" value="ECO:0007669"/>
    <property type="project" value="UniProtKB-SubCell"/>
</dbReference>
<dbReference type="GO" id="GO:0090416">
    <property type="term" value="F:nicotinate transmembrane transporter activity"/>
    <property type="evidence" value="ECO:0000314"/>
    <property type="project" value="UniProtKB"/>
</dbReference>
<dbReference type="GO" id="GO:0045922">
    <property type="term" value="P:negative regulation of fatty acid metabolic process"/>
    <property type="evidence" value="ECO:0000314"/>
    <property type="project" value="UniProtKB"/>
</dbReference>
<dbReference type="GO" id="GO:2001142">
    <property type="term" value="P:nicotinate transport"/>
    <property type="evidence" value="ECO:0000314"/>
    <property type="project" value="UniProtKB"/>
</dbReference>
<dbReference type="Gene3D" id="1.20.1250.20">
    <property type="entry name" value="MFS general substrate transporter like domains"/>
    <property type="match status" value="1"/>
</dbReference>
<dbReference type="InterPro" id="IPR020846">
    <property type="entry name" value="MFS_dom"/>
</dbReference>
<dbReference type="InterPro" id="IPR005828">
    <property type="entry name" value="MFS_sugar_transport-like"/>
</dbReference>
<dbReference type="InterPro" id="IPR036259">
    <property type="entry name" value="MFS_trans_sf"/>
</dbReference>
<dbReference type="InterPro" id="IPR005829">
    <property type="entry name" value="Sugar_transporter_CS"/>
</dbReference>
<dbReference type="PANTHER" id="PTHR24064">
    <property type="entry name" value="SOLUTE CARRIER FAMILY 22 MEMBER"/>
    <property type="match status" value="1"/>
</dbReference>
<dbReference type="Pfam" id="PF00083">
    <property type="entry name" value="Sugar_tr"/>
    <property type="match status" value="1"/>
</dbReference>
<dbReference type="SUPFAM" id="SSF103473">
    <property type="entry name" value="MFS general substrate transporter"/>
    <property type="match status" value="1"/>
</dbReference>
<dbReference type="PROSITE" id="PS50850">
    <property type="entry name" value="MFS"/>
    <property type="match status" value="1"/>
</dbReference>
<comment type="function">
    <text evidence="1 4">Anion antiporter that mediates the transport of orotate and nicotinate in exchange for organic or inorganic anions (PubMed:35144162). Translocates orotate across the apical membrane of proximal tubule epithelial cells. Possibly involved in orotate renal reabsorption and nicotinate intestinal reabsorption (PubMed:35144162). Orotate transport is Cl(-)-dependent (By similarity).</text>
</comment>
<comment type="catalytic activity">
    <reaction evidence="7">
        <text>nicotinate(in) + a carboxylate(out) = nicotinate(out) + a carboxylate(in)</text>
        <dbReference type="Rhea" id="RHEA:74371"/>
        <dbReference type="ChEBI" id="CHEBI:29067"/>
        <dbReference type="ChEBI" id="CHEBI:32544"/>
    </reaction>
</comment>
<comment type="catalytic activity">
    <reaction evidence="7">
        <text>orotate(out) + a carboxylate(in) = orotate(in) + a carboxylate(out)</text>
        <dbReference type="Rhea" id="RHEA:73487"/>
        <dbReference type="ChEBI" id="CHEBI:29067"/>
        <dbReference type="ChEBI" id="CHEBI:30839"/>
    </reaction>
</comment>
<comment type="subcellular location">
    <subcellularLocation>
        <location evidence="1">Apical cell membrane</location>
        <topology evidence="1">Multi-pass membrane protein</topology>
    </subcellularLocation>
</comment>
<comment type="PTM">
    <text evidence="1">Glycosylated.</text>
</comment>
<comment type="similarity">
    <text evidence="6">Belongs to the major facilitator (TC 2.A.1) superfamily. Organic cation transporter (TC 2.A.1.19) family.</text>
</comment>
<comment type="caution">
    <text evidence="4">In contrast with human ortholog, not able to transport urate (PubMed:35144162).</text>
</comment>
<gene>
    <name evidence="8" type="primary">Slc22a13</name>
    <name type="synonym">Orctl3</name>
</gene>
<evidence type="ECO:0000250" key="1">
    <source>
        <dbReference type="UniProtKB" id="Q9Y226"/>
    </source>
</evidence>
<evidence type="ECO:0000255" key="2"/>
<evidence type="ECO:0000269" key="3">
    <source>
    </source>
</evidence>
<evidence type="ECO:0000269" key="4">
    <source>
    </source>
</evidence>
<evidence type="ECO:0000303" key="5">
    <source>
    </source>
</evidence>
<evidence type="ECO:0000305" key="6"/>
<evidence type="ECO:0000305" key="7">
    <source>
    </source>
</evidence>
<evidence type="ECO:0000312" key="8">
    <source>
        <dbReference type="MGI" id="MGI:2143107"/>
    </source>
</evidence>
<reference key="1">
    <citation type="submission" date="2002-07" db="EMBL/GenBank/DDBJ databases">
        <title>Sequence of murine organic cation transporter-like 3 (ORCTL-3).</title>
        <authorList>
            <person name="Mount D.B."/>
        </authorList>
    </citation>
    <scope>NUCLEOTIDE SEQUENCE [MRNA]</scope>
    <source>
        <strain>C57BL/6J</strain>
    </source>
</reference>
<reference key="2">
    <citation type="journal article" date="2009" name="PLoS Biol.">
        <title>Lineage-specific biology revealed by a finished genome assembly of the mouse.</title>
        <authorList>
            <person name="Church D.M."/>
            <person name="Goodstadt L."/>
            <person name="Hillier L.W."/>
            <person name="Zody M.C."/>
            <person name="Goldstein S."/>
            <person name="She X."/>
            <person name="Bult C.J."/>
            <person name="Agarwala R."/>
            <person name="Cherry J.L."/>
            <person name="DiCuccio M."/>
            <person name="Hlavina W."/>
            <person name="Kapustin Y."/>
            <person name="Meric P."/>
            <person name="Maglott D."/>
            <person name="Birtle Z."/>
            <person name="Marques A.C."/>
            <person name="Graves T."/>
            <person name="Zhou S."/>
            <person name="Teague B."/>
            <person name="Potamousis K."/>
            <person name="Churas C."/>
            <person name="Place M."/>
            <person name="Herschleb J."/>
            <person name="Runnheim R."/>
            <person name="Forrest D."/>
            <person name="Amos-Landgraf J."/>
            <person name="Schwartz D.C."/>
            <person name="Cheng Z."/>
            <person name="Lindblad-Toh K."/>
            <person name="Eichler E.E."/>
            <person name="Ponting C.P."/>
        </authorList>
    </citation>
    <scope>NUCLEOTIDE SEQUENCE [LARGE SCALE GENOMIC DNA]</scope>
    <source>
        <strain>C57BL/6J</strain>
    </source>
</reference>
<reference key="3">
    <citation type="journal article" date="2004" name="Genome Res.">
        <title>The status, quality, and expansion of the NIH full-length cDNA project: the Mammalian Gene Collection (MGC).</title>
        <authorList>
            <consortium name="The MGC Project Team"/>
        </authorList>
    </citation>
    <scope>NUCLEOTIDE SEQUENCE [LARGE SCALE MRNA]</scope>
    <scope>VARIANTS THR-77; ILE-506 AND SER-535</scope>
    <source>
        <strain>FVB/N</strain>
        <tissue>Kidney</tissue>
    </source>
</reference>
<reference key="4">
    <citation type="journal article" date="2010" name="Cell">
        <title>A tissue-specific atlas of mouse protein phosphorylation and expression.</title>
        <authorList>
            <person name="Huttlin E.L."/>
            <person name="Jedrychowski M.P."/>
            <person name="Elias J.E."/>
            <person name="Goswami T."/>
            <person name="Rad R."/>
            <person name="Beausoleil S.A."/>
            <person name="Villen J."/>
            <person name="Haas W."/>
            <person name="Sowa M.E."/>
            <person name="Gygi S.P."/>
        </authorList>
    </citation>
    <scope>IDENTIFICATION BY MASS SPECTROMETRY [LARGE SCALE ANALYSIS]</scope>
    <source>
        <tissue>Kidney</tissue>
    </source>
</reference>
<reference key="5">
    <citation type="journal article" date="2022" name="Drug Metab. Pharmacokinet.">
        <title>Functional characterization of human organic anion transporter 10 (OAT10/SLC22A13) as an orotate transporter.</title>
        <authorList>
            <person name="Shinoda Y."/>
            <person name="Yamashiro T."/>
            <person name="Hosooka A."/>
            <person name="Yasujima T."/>
            <person name="Yuasa H."/>
        </authorList>
    </citation>
    <scope>FUNCTION</scope>
    <scope>TRANSPORTER ACTIVITY</scope>
</reference>
<feature type="chain" id="PRO_0000230783" description="Solute carrier family 22 member 13">
    <location>
        <begin position="1"/>
        <end position="551"/>
    </location>
</feature>
<feature type="topological domain" description="Cytoplasmic" evidence="2">
    <location>
        <begin position="1"/>
        <end position="22"/>
    </location>
</feature>
<feature type="transmembrane region" description="Helical" evidence="2">
    <location>
        <begin position="23"/>
        <end position="43"/>
    </location>
</feature>
<feature type="topological domain" description="Extracellular" evidence="2">
    <location>
        <begin position="44"/>
        <end position="142"/>
    </location>
</feature>
<feature type="transmembrane region" description="Helical" evidence="2">
    <location>
        <begin position="143"/>
        <end position="163"/>
    </location>
</feature>
<feature type="topological domain" description="Cytoplasmic" evidence="2">
    <location>
        <begin position="164"/>
        <end position="167"/>
    </location>
</feature>
<feature type="transmembrane region" description="Helical" evidence="2">
    <location>
        <begin position="168"/>
        <end position="188"/>
    </location>
</feature>
<feature type="topological domain" description="Extracellular" evidence="2">
    <location>
        <begin position="189"/>
        <end position="195"/>
    </location>
</feature>
<feature type="transmembrane region" description="Helical" evidence="2">
    <location>
        <begin position="196"/>
        <end position="216"/>
    </location>
</feature>
<feature type="topological domain" description="Cytoplasmic" evidence="2">
    <location>
        <begin position="217"/>
        <end position="224"/>
    </location>
</feature>
<feature type="transmembrane region" description="Helical" evidence="2">
    <location>
        <begin position="225"/>
        <end position="245"/>
    </location>
</feature>
<feature type="topological domain" description="Extracellular" evidence="2">
    <location>
        <begin position="246"/>
        <end position="251"/>
    </location>
</feature>
<feature type="transmembrane region" description="Helical" evidence="2">
    <location>
        <begin position="252"/>
        <end position="272"/>
    </location>
</feature>
<feature type="topological domain" description="Cytoplasmic" evidence="2">
    <location>
        <begin position="273"/>
        <end position="332"/>
    </location>
</feature>
<feature type="transmembrane region" description="Helical" evidence="2">
    <location>
        <begin position="333"/>
        <end position="353"/>
    </location>
</feature>
<feature type="topological domain" description="Extracellular" evidence="2">
    <location>
        <position position="354"/>
    </location>
</feature>
<feature type="transmembrane region" description="Helical" evidence="2">
    <location>
        <begin position="355"/>
        <end position="375"/>
    </location>
</feature>
<feature type="topological domain" description="Cytoplasmic" evidence="2">
    <location>
        <begin position="376"/>
        <end position="404"/>
    </location>
</feature>
<feature type="transmembrane region" description="Helical" evidence="2">
    <location>
        <begin position="405"/>
        <end position="425"/>
    </location>
</feature>
<feature type="topological domain" description="Extracellular" evidence="2">
    <location>
        <begin position="426"/>
        <end position="427"/>
    </location>
</feature>
<feature type="transmembrane region" description="Helical" evidence="2">
    <location>
        <begin position="428"/>
        <end position="448"/>
    </location>
</feature>
<feature type="topological domain" description="Cytoplasmic" evidence="2">
    <location>
        <begin position="449"/>
        <end position="452"/>
    </location>
</feature>
<feature type="transmembrane region" description="Helical" evidence="2">
    <location>
        <begin position="453"/>
        <end position="473"/>
    </location>
</feature>
<feature type="topological domain" description="Extracellular" evidence="2">
    <location>
        <begin position="474"/>
        <end position="478"/>
    </location>
</feature>
<feature type="transmembrane region" description="Helical" evidence="2">
    <location>
        <begin position="479"/>
        <end position="499"/>
    </location>
</feature>
<feature type="topological domain" description="Cytoplasmic" evidence="2">
    <location>
        <begin position="500"/>
        <end position="551"/>
    </location>
</feature>
<feature type="glycosylation site" description="N-linked (GlcNAc...) asparagine" evidence="2">
    <location>
        <position position="57"/>
    </location>
</feature>
<feature type="glycosylation site" description="N-linked (GlcNAc...) asparagine" evidence="2">
    <location>
        <position position="61"/>
    </location>
</feature>
<feature type="glycosylation site" description="N-linked (GlcNAc...) asparagine" evidence="2">
    <location>
        <position position="74"/>
    </location>
</feature>
<feature type="glycosylation site" description="N-linked (GlcNAc...) asparagine" evidence="2">
    <location>
        <position position="104"/>
    </location>
</feature>
<feature type="sequence variant" description="In strain: FVB/N." evidence="3">
    <original>A</original>
    <variation>T</variation>
    <location>
        <position position="77"/>
    </location>
</feature>
<feature type="sequence variant" description="In strain: FVB/N." evidence="3">
    <original>T</original>
    <variation>I</variation>
    <location>
        <position position="506"/>
    </location>
</feature>
<feature type="sequence variant" description="In strain: FVB/N." evidence="3">
    <original>L</original>
    <variation>S</variation>
    <location>
        <position position="535"/>
    </location>
</feature>
<feature type="sequence conflict" description="In Ref. 1; AAQ09528." evidence="6" ref="1">
    <original>I</original>
    <variation>V</variation>
    <location>
        <position position="402"/>
    </location>
</feature>
<name>S22AD_MOUSE</name>
<proteinExistence type="evidence at protein level"/>